<gene>
    <name evidence="1" type="primary">rpmJ</name>
    <name type="ordered locus">A1S_3060</name>
</gene>
<protein>
    <recommendedName>
        <fullName evidence="1">Large ribosomal subunit protein bL36</fullName>
    </recommendedName>
    <alternativeName>
        <fullName evidence="2">50S ribosomal protein L36</fullName>
    </alternativeName>
</protein>
<comment type="similarity">
    <text evidence="1">Belongs to the bacterial ribosomal protein bL36 family.</text>
</comment>
<keyword id="KW-0687">Ribonucleoprotein</keyword>
<keyword id="KW-0689">Ribosomal protein</keyword>
<reference key="1">
    <citation type="journal article" date="2007" name="Genes Dev.">
        <title>New insights into Acinetobacter baumannii pathogenesis revealed by high-density pyrosequencing and transposon mutagenesis.</title>
        <authorList>
            <person name="Smith M.G."/>
            <person name="Gianoulis T.A."/>
            <person name="Pukatzki S."/>
            <person name="Mekalanos J.J."/>
            <person name="Ornston L.N."/>
            <person name="Gerstein M."/>
            <person name="Snyder M."/>
        </authorList>
    </citation>
    <scope>NUCLEOTIDE SEQUENCE [LARGE SCALE GENOMIC DNA]</scope>
    <source>
        <strain>ATCC 17978 / DSM 105126 / CIP 53.77 / LMG 1025 / NCDC KC755 / 5377</strain>
    </source>
</reference>
<proteinExistence type="inferred from homology"/>
<accession>A3M963</accession>
<feature type="chain" id="PRO_0000302147" description="Large ribosomal subunit protein bL36">
    <location>
        <begin position="1"/>
        <end position="38"/>
    </location>
</feature>
<dbReference type="EMBL" id="CP000521">
    <property type="protein sequence ID" value="ABO13457.1"/>
    <property type="molecule type" value="Genomic_DNA"/>
</dbReference>
<dbReference type="RefSeq" id="WP_000867907.1">
    <property type="nucleotide sequence ID" value="NZ_CP053098.1"/>
</dbReference>
<dbReference type="SMR" id="A3M963"/>
<dbReference type="GeneID" id="97425220"/>
<dbReference type="KEGG" id="acb:A1S_3060"/>
<dbReference type="HOGENOM" id="CLU_135723_6_2_6"/>
<dbReference type="GO" id="GO:0005737">
    <property type="term" value="C:cytoplasm"/>
    <property type="evidence" value="ECO:0007669"/>
    <property type="project" value="UniProtKB-ARBA"/>
</dbReference>
<dbReference type="GO" id="GO:1990904">
    <property type="term" value="C:ribonucleoprotein complex"/>
    <property type="evidence" value="ECO:0007669"/>
    <property type="project" value="UniProtKB-KW"/>
</dbReference>
<dbReference type="GO" id="GO:0005840">
    <property type="term" value="C:ribosome"/>
    <property type="evidence" value="ECO:0007669"/>
    <property type="project" value="UniProtKB-KW"/>
</dbReference>
<dbReference type="GO" id="GO:0003735">
    <property type="term" value="F:structural constituent of ribosome"/>
    <property type="evidence" value="ECO:0007669"/>
    <property type="project" value="InterPro"/>
</dbReference>
<dbReference type="GO" id="GO:0006412">
    <property type="term" value="P:translation"/>
    <property type="evidence" value="ECO:0007669"/>
    <property type="project" value="UniProtKB-UniRule"/>
</dbReference>
<dbReference type="HAMAP" id="MF_00251">
    <property type="entry name" value="Ribosomal_bL36"/>
    <property type="match status" value="1"/>
</dbReference>
<dbReference type="InterPro" id="IPR000473">
    <property type="entry name" value="Ribosomal_bL36"/>
</dbReference>
<dbReference type="InterPro" id="IPR035977">
    <property type="entry name" value="Ribosomal_bL36_sp"/>
</dbReference>
<dbReference type="NCBIfam" id="TIGR01022">
    <property type="entry name" value="rpmJ_bact"/>
    <property type="match status" value="1"/>
</dbReference>
<dbReference type="PANTHER" id="PTHR42888">
    <property type="entry name" value="50S RIBOSOMAL PROTEIN L36, CHLOROPLASTIC"/>
    <property type="match status" value="1"/>
</dbReference>
<dbReference type="PANTHER" id="PTHR42888:SF1">
    <property type="entry name" value="LARGE RIBOSOMAL SUBUNIT PROTEIN BL36C"/>
    <property type="match status" value="1"/>
</dbReference>
<dbReference type="Pfam" id="PF00444">
    <property type="entry name" value="Ribosomal_L36"/>
    <property type="match status" value="1"/>
</dbReference>
<dbReference type="SUPFAM" id="SSF57840">
    <property type="entry name" value="Ribosomal protein L36"/>
    <property type="match status" value="1"/>
</dbReference>
<dbReference type="PROSITE" id="PS00828">
    <property type="entry name" value="RIBOSOMAL_L36"/>
    <property type="match status" value="1"/>
</dbReference>
<organism>
    <name type="scientific">Acinetobacter baumannii (strain ATCC 17978 / DSM 105126 / CIP 53.77 / LMG 1025 / NCDC KC755 / 5377)</name>
    <dbReference type="NCBI Taxonomy" id="400667"/>
    <lineage>
        <taxon>Bacteria</taxon>
        <taxon>Pseudomonadati</taxon>
        <taxon>Pseudomonadota</taxon>
        <taxon>Gammaproteobacteria</taxon>
        <taxon>Moraxellales</taxon>
        <taxon>Moraxellaceae</taxon>
        <taxon>Acinetobacter</taxon>
        <taxon>Acinetobacter calcoaceticus/baumannii complex</taxon>
    </lineage>
</organism>
<sequence length="38" mass="4265">MKVQASVKKICGSCKVIRRNGVIRVICSAEPRHKQRQG</sequence>
<name>RL36_ACIBT</name>
<evidence type="ECO:0000255" key="1">
    <source>
        <dbReference type="HAMAP-Rule" id="MF_00251"/>
    </source>
</evidence>
<evidence type="ECO:0000305" key="2"/>